<dbReference type="EC" id="7.3.2.1" evidence="1"/>
<dbReference type="EMBL" id="BA000016">
    <property type="protein sequence ID" value="BAB80346.1"/>
    <property type="molecule type" value="Genomic_DNA"/>
</dbReference>
<dbReference type="RefSeq" id="WP_003453508.1">
    <property type="nucleotide sequence ID" value="NC_003366.1"/>
</dbReference>
<dbReference type="SMR" id="Q8XMP8"/>
<dbReference type="STRING" id="195102.gene:10489901"/>
<dbReference type="GeneID" id="93003035"/>
<dbReference type="KEGG" id="cpe:CPE0640"/>
<dbReference type="HOGENOM" id="CLU_000604_1_22_9"/>
<dbReference type="Proteomes" id="UP000000818">
    <property type="component" value="Chromosome"/>
</dbReference>
<dbReference type="GO" id="GO:0005886">
    <property type="term" value="C:plasma membrane"/>
    <property type="evidence" value="ECO:0007669"/>
    <property type="project" value="UniProtKB-SubCell"/>
</dbReference>
<dbReference type="GO" id="GO:0005524">
    <property type="term" value="F:ATP binding"/>
    <property type="evidence" value="ECO:0007669"/>
    <property type="project" value="UniProtKB-KW"/>
</dbReference>
<dbReference type="GO" id="GO:0016887">
    <property type="term" value="F:ATP hydrolysis activity"/>
    <property type="evidence" value="ECO:0007669"/>
    <property type="project" value="InterPro"/>
</dbReference>
<dbReference type="GO" id="GO:0015415">
    <property type="term" value="F:ATPase-coupled phosphate ion transmembrane transporter activity"/>
    <property type="evidence" value="ECO:0007669"/>
    <property type="project" value="UniProtKB-EC"/>
</dbReference>
<dbReference type="GO" id="GO:0035435">
    <property type="term" value="P:phosphate ion transmembrane transport"/>
    <property type="evidence" value="ECO:0007669"/>
    <property type="project" value="InterPro"/>
</dbReference>
<dbReference type="CDD" id="cd03260">
    <property type="entry name" value="ABC_PstB_phosphate_transporter"/>
    <property type="match status" value="1"/>
</dbReference>
<dbReference type="FunFam" id="3.40.50.300:FF:000132">
    <property type="entry name" value="Phosphate import ATP-binding protein PstB"/>
    <property type="match status" value="1"/>
</dbReference>
<dbReference type="Gene3D" id="3.40.50.300">
    <property type="entry name" value="P-loop containing nucleotide triphosphate hydrolases"/>
    <property type="match status" value="1"/>
</dbReference>
<dbReference type="InterPro" id="IPR003593">
    <property type="entry name" value="AAA+_ATPase"/>
</dbReference>
<dbReference type="InterPro" id="IPR003439">
    <property type="entry name" value="ABC_transporter-like_ATP-bd"/>
</dbReference>
<dbReference type="InterPro" id="IPR017871">
    <property type="entry name" value="ABC_transporter-like_CS"/>
</dbReference>
<dbReference type="InterPro" id="IPR027417">
    <property type="entry name" value="P-loop_NTPase"/>
</dbReference>
<dbReference type="InterPro" id="IPR005670">
    <property type="entry name" value="PstB-like"/>
</dbReference>
<dbReference type="NCBIfam" id="TIGR00972">
    <property type="entry name" value="3a0107s01c2"/>
    <property type="match status" value="1"/>
</dbReference>
<dbReference type="PANTHER" id="PTHR43423">
    <property type="entry name" value="ABC TRANSPORTER I FAMILY MEMBER 17"/>
    <property type="match status" value="1"/>
</dbReference>
<dbReference type="PANTHER" id="PTHR43423:SF1">
    <property type="entry name" value="ABC TRANSPORTER I FAMILY MEMBER 17"/>
    <property type="match status" value="1"/>
</dbReference>
<dbReference type="Pfam" id="PF00005">
    <property type="entry name" value="ABC_tran"/>
    <property type="match status" value="1"/>
</dbReference>
<dbReference type="SMART" id="SM00382">
    <property type="entry name" value="AAA"/>
    <property type="match status" value="1"/>
</dbReference>
<dbReference type="SUPFAM" id="SSF52540">
    <property type="entry name" value="P-loop containing nucleoside triphosphate hydrolases"/>
    <property type="match status" value="1"/>
</dbReference>
<dbReference type="PROSITE" id="PS00211">
    <property type="entry name" value="ABC_TRANSPORTER_1"/>
    <property type="match status" value="1"/>
</dbReference>
<dbReference type="PROSITE" id="PS50893">
    <property type="entry name" value="ABC_TRANSPORTER_2"/>
    <property type="match status" value="1"/>
</dbReference>
<dbReference type="PROSITE" id="PS51238">
    <property type="entry name" value="PSTB"/>
    <property type="match status" value="1"/>
</dbReference>
<gene>
    <name evidence="1" type="primary">pstB</name>
    <name type="ordered locus">CPE0640</name>
</gene>
<keyword id="KW-0067">ATP-binding</keyword>
<keyword id="KW-1003">Cell membrane</keyword>
<keyword id="KW-0472">Membrane</keyword>
<keyword id="KW-0547">Nucleotide-binding</keyword>
<keyword id="KW-0592">Phosphate transport</keyword>
<keyword id="KW-1185">Reference proteome</keyword>
<keyword id="KW-1278">Translocase</keyword>
<keyword id="KW-0813">Transport</keyword>
<comment type="function">
    <text evidence="1">Part of the ABC transporter complex PstSACB involved in phosphate import. Responsible for energy coupling to the transport system.</text>
</comment>
<comment type="catalytic activity">
    <reaction evidence="1">
        <text>phosphate(out) + ATP + H2O = ADP + 2 phosphate(in) + H(+)</text>
        <dbReference type="Rhea" id="RHEA:24440"/>
        <dbReference type="ChEBI" id="CHEBI:15377"/>
        <dbReference type="ChEBI" id="CHEBI:15378"/>
        <dbReference type="ChEBI" id="CHEBI:30616"/>
        <dbReference type="ChEBI" id="CHEBI:43474"/>
        <dbReference type="ChEBI" id="CHEBI:456216"/>
        <dbReference type="EC" id="7.3.2.1"/>
    </reaction>
</comment>
<comment type="subunit">
    <text evidence="1">The complex is composed of two ATP-binding proteins (PstB), two transmembrane proteins (PstC and PstA) and a solute-binding protein (PstS).</text>
</comment>
<comment type="subcellular location">
    <subcellularLocation>
        <location evidence="1">Cell membrane</location>
        <topology evidence="1">Peripheral membrane protein</topology>
    </subcellularLocation>
</comment>
<comment type="similarity">
    <text evidence="1">Belongs to the ABC transporter superfamily. Phosphate importer (TC 3.A.1.7) family.</text>
</comment>
<name>PSTB_CLOPE</name>
<organism>
    <name type="scientific">Clostridium perfringens (strain 13 / Type A)</name>
    <dbReference type="NCBI Taxonomy" id="195102"/>
    <lineage>
        <taxon>Bacteria</taxon>
        <taxon>Bacillati</taxon>
        <taxon>Bacillota</taxon>
        <taxon>Clostridia</taxon>
        <taxon>Eubacteriales</taxon>
        <taxon>Clostridiaceae</taxon>
        <taxon>Clostridium</taxon>
    </lineage>
</organism>
<feature type="chain" id="PRO_0000092803" description="Phosphate import ATP-binding protein PstB">
    <location>
        <begin position="1"/>
        <end position="253"/>
    </location>
</feature>
<feature type="domain" description="ABC transporter" evidence="1">
    <location>
        <begin position="8"/>
        <end position="248"/>
    </location>
</feature>
<feature type="binding site" evidence="1">
    <location>
        <begin position="40"/>
        <end position="47"/>
    </location>
    <ligand>
        <name>ATP</name>
        <dbReference type="ChEBI" id="CHEBI:30616"/>
    </ligand>
</feature>
<sequence length="253" mass="28589">MSDKKTKIQVRDLDLFYASNHALKKINIDIKENEVTALIGPSGCGKSTFLRTLNRMNDLIPIVRIEGEIQVDGKDIYKDDDVIALRTKVGMVFQKPNLFPMSIYDNVAYGPRVHGIKDKKVLDKIVEESLRDAAIWDEVKNRLKSSALGLSGGQQQRICIARAIAMNPEIILMDEPTSALDPISTLKVEELIRKLEDKYTIVIVTHNMQQAARISDKTAFFLNGELVEFSDTNTIFTNPRDKRTEDYITGRFG</sequence>
<evidence type="ECO:0000255" key="1">
    <source>
        <dbReference type="HAMAP-Rule" id="MF_01702"/>
    </source>
</evidence>
<accession>Q8XMP8</accession>
<proteinExistence type="inferred from homology"/>
<reference key="1">
    <citation type="journal article" date="2002" name="Proc. Natl. Acad. Sci. U.S.A.">
        <title>Complete genome sequence of Clostridium perfringens, an anaerobic flesh-eater.</title>
        <authorList>
            <person name="Shimizu T."/>
            <person name="Ohtani K."/>
            <person name="Hirakawa H."/>
            <person name="Ohshima K."/>
            <person name="Yamashita A."/>
            <person name="Shiba T."/>
            <person name="Ogasawara N."/>
            <person name="Hattori M."/>
            <person name="Kuhara S."/>
            <person name="Hayashi H."/>
        </authorList>
    </citation>
    <scope>NUCLEOTIDE SEQUENCE [LARGE SCALE GENOMIC DNA]</scope>
    <source>
        <strain>13 / Type A</strain>
    </source>
</reference>
<protein>
    <recommendedName>
        <fullName evidence="1">Phosphate import ATP-binding protein PstB</fullName>
        <ecNumber evidence="1">7.3.2.1</ecNumber>
    </recommendedName>
    <alternativeName>
        <fullName evidence="1">ABC phosphate transporter</fullName>
    </alternativeName>
    <alternativeName>
        <fullName evidence="1">Phosphate-transporting ATPase</fullName>
    </alternativeName>
</protein>